<comment type="subcellular location">
    <subcellularLocation>
        <location evidence="3">Membrane</location>
        <topology evidence="3">Multi-pass membrane protein</topology>
    </subcellularLocation>
</comment>
<comment type="similarity">
    <text evidence="3">Belongs to the ST7 family.</text>
</comment>
<keyword id="KW-0325">Glycoprotein</keyword>
<keyword id="KW-0472">Membrane</keyword>
<keyword id="KW-0597">Phosphoprotein</keyword>
<keyword id="KW-1185">Reference proteome</keyword>
<keyword id="KW-0812">Transmembrane</keyword>
<keyword id="KW-1133">Transmembrane helix</keyword>
<proteinExistence type="inferred from homology"/>
<feature type="chain" id="PRO_0000339210" description="Suppressor of tumorigenicity 7 protein">
    <location>
        <begin position="1"/>
        <end position="585"/>
    </location>
</feature>
<feature type="transmembrane region" description="Helical" evidence="2">
    <location>
        <begin position="15"/>
        <end position="35"/>
    </location>
</feature>
<feature type="transmembrane region" description="Helical" evidence="2">
    <location>
        <begin position="62"/>
        <end position="82"/>
    </location>
</feature>
<feature type="transmembrane region" description="Helical" evidence="2">
    <location>
        <begin position="512"/>
        <end position="532"/>
    </location>
</feature>
<feature type="modified residue" description="Phosphoserine" evidence="1">
    <location>
        <position position="386"/>
    </location>
</feature>
<feature type="glycosylation site" description="N-linked (GlcNAc...) asparagine" evidence="2">
    <location>
        <position position="47"/>
    </location>
</feature>
<gene>
    <name type="primary">ST7</name>
</gene>
<name>ST7_PANTR</name>
<organism>
    <name type="scientific">Pan troglodytes</name>
    <name type="common">Chimpanzee</name>
    <dbReference type="NCBI Taxonomy" id="9598"/>
    <lineage>
        <taxon>Eukaryota</taxon>
        <taxon>Metazoa</taxon>
        <taxon>Chordata</taxon>
        <taxon>Craniata</taxon>
        <taxon>Vertebrata</taxon>
        <taxon>Euteleostomi</taxon>
        <taxon>Mammalia</taxon>
        <taxon>Eutheria</taxon>
        <taxon>Euarchontoglires</taxon>
        <taxon>Primates</taxon>
        <taxon>Haplorrhini</taxon>
        <taxon>Catarrhini</taxon>
        <taxon>Hominidae</taxon>
        <taxon>Pan</taxon>
    </lineage>
</organism>
<sequence>MAEAATGFLEQLKSCIVWSWTYLWTVWFFIVLFLVYILRVPLKINDNLSTVSMFLNTLTPKFYVALTGTSSLISGLILIFEWWYFRKYGTSFIEQVSVSHLRPLLGGVDNNSSNNSNSSNGDSDSNRQSVSECKVWRNPLNLFRGAEYNRYTWVTGREPLTYYDMNLSAQDHQTFFTCDSDHLRPADAIMQKAWRERNPQARISAAHEALEINEIRSRVEVPLIASSTIWEIKLLPKCATAYILLAEEEATTIAEAEKLFKQALKAGDGCYRRSQQLQHHGSQYEAQHRRDTNVLVYIKRRLAMCARRLGRTREAVKMMRDLMKEFPLLSMFNIHENLLEALLELQAYADVQAVLAKYDDISLPKSATICYTAALLKARAVSDKFSPEAASRRGLSTAEMNAVEAIHRAVEFNPHVPKYLLEMKSLILPPEHILKRGDSEAIAYAFFHLAHWKRVEGALNLLHCTWEGTFRMIPYPLEKGHLFYPYPICTETADRELLPSFHEVSVYPKKELPFFILFTAGLCSFTAMLALLTHQFPELMGVFAKAMIDIFCSAEFRDWNCKSIFMRVEDELEIPPAPQSQHFQN</sequence>
<accession>Q2QLE8</accession>
<dbReference type="EMBL" id="DP000016">
    <property type="protein sequence ID" value="AAR16250.2"/>
    <property type="molecule type" value="Genomic_DNA"/>
</dbReference>
<dbReference type="RefSeq" id="XP_009452303.1">
    <property type="nucleotide sequence ID" value="XM_009454028.2"/>
</dbReference>
<dbReference type="RefSeq" id="XP_024213380.1">
    <property type="nucleotide sequence ID" value="XM_024357612.3"/>
</dbReference>
<dbReference type="FunCoup" id="Q2QLE8">
    <property type="interactions" value="1386"/>
</dbReference>
<dbReference type="STRING" id="9598.ENSPTRP00000085319"/>
<dbReference type="GlyCosmos" id="Q2QLE8">
    <property type="glycosylation" value="1 site, No reported glycans"/>
</dbReference>
<dbReference type="PaxDb" id="9598-ENSPTRP00000033590"/>
<dbReference type="Ensembl" id="ENSPTRT00000095303.1">
    <property type="protein sequence ID" value="ENSPTRP00000085319.1"/>
    <property type="gene ID" value="ENSPTRG00000019616.6"/>
</dbReference>
<dbReference type="GeneID" id="463672"/>
<dbReference type="eggNOG" id="KOG3807">
    <property type="taxonomic scope" value="Eukaryota"/>
</dbReference>
<dbReference type="GeneTree" id="ENSGT00390000000873"/>
<dbReference type="InParanoid" id="Q2QLE8"/>
<dbReference type="Proteomes" id="UP000002277">
    <property type="component" value="Chromosome 7"/>
</dbReference>
<dbReference type="Bgee" id="ENSPTRG00000019616">
    <property type="expression patterns" value="Expressed in cerebellar cortex and 21 other cell types or tissues"/>
</dbReference>
<dbReference type="GO" id="GO:0016020">
    <property type="term" value="C:membrane"/>
    <property type="evidence" value="ECO:0007669"/>
    <property type="project" value="UniProtKB-SubCell"/>
</dbReference>
<dbReference type="CDD" id="cd11557">
    <property type="entry name" value="ST7"/>
    <property type="match status" value="1"/>
</dbReference>
<dbReference type="InterPro" id="IPR007311">
    <property type="entry name" value="ST7"/>
</dbReference>
<dbReference type="PANTHER" id="PTHR12745">
    <property type="entry name" value="SUPPRESSION OF TUMORIGENICITY 7"/>
    <property type="match status" value="1"/>
</dbReference>
<dbReference type="PANTHER" id="PTHR12745:SF10">
    <property type="entry name" value="SUPPRESSOR OF TUMORIGENICITY 7 PROTEIN"/>
    <property type="match status" value="1"/>
</dbReference>
<dbReference type="Pfam" id="PF04184">
    <property type="entry name" value="ST7"/>
    <property type="match status" value="1"/>
</dbReference>
<evidence type="ECO:0000250" key="1">
    <source>
        <dbReference type="UniProtKB" id="Q9NRC1"/>
    </source>
</evidence>
<evidence type="ECO:0000255" key="2"/>
<evidence type="ECO:0000305" key="3"/>
<reference key="1">
    <citation type="journal article" date="2003" name="Nature">
        <title>Comparative analyses of multi-species sequences from targeted genomic regions.</title>
        <authorList>
            <person name="Thomas J.W."/>
            <person name="Touchman J.W."/>
            <person name="Blakesley R.W."/>
            <person name="Bouffard G.G."/>
            <person name="Beckstrom-Sternberg S.M."/>
            <person name="Margulies E.H."/>
            <person name="Blanchette M."/>
            <person name="Siepel A.C."/>
            <person name="Thomas P.J."/>
            <person name="McDowell J.C."/>
            <person name="Maskeri B."/>
            <person name="Hansen N.F."/>
            <person name="Schwartz M.S."/>
            <person name="Weber R.J."/>
            <person name="Kent W.J."/>
            <person name="Karolchik D."/>
            <person name="Bruen T.C."/>
            <person name="Bevan R."/>
            <person name="Cutler D.J."/>
            <person name="Schwartz S."/>
            <person name="Elnitski L."/>
            <person name="Idol J.R."/>
            <person name="Prasad A.B."/>
            <person name="Lee-Lin S.-Q."/>
            <person name="Maduro V.V.B."/>
            <person name="Summers T.J."/>
            <person name="Portnoy M.E."/>
            <person name="Dietrich N.L."/>
            <person name="Akhter N."/>
            <person name="Ayele K."/>
            <person name="Benjamin B."/>
            <person name="Cariaga K."/>
            <person name="Brinkley C.P."/>
            <person name="Brooks S.Y."/>
            <person name="Granite S."/>
            <person name="Guan X."/>
            <person name="Gupta J."/>
            <person name="Haghighi P."/>
            <person name="Ho S.-L."/>
            <person name="Huang M.C."/>
            <person name="Karlins E."/>
            <person name="Laric P.L."/>
            <person name="Legaspi R."/>
            <person name="Lim M.J."/>
            <person name="Maduro Q.L."/>
            <person name="Masiello C.A."/>
            <person name="Mastrian S.D."/>
            <person name="McCloskey J.C."/>
            <person name="Pearson R."/>
            <person name="Stantripop S."/>
            <person name="Tiongson E.E."/>
            <person name="Tran J.T."/>
            <person name="Tsurgeon C."/>
            <person name="Vogt J.L."/>
            <person name="Walker M.A."/>
            <person name="Wetherby K.D."/>
            <person name="Wiggins L.S."/>
            <person name="Young A.C."/>
            <person name="Zhang L.-H."/>
            <person name="Osoegawa K."/>
            <person name="Zhu B."/>
            <person name="Zhao B."/>
            <person name="Shu C.L."/>
            <person name="De Jong P.J."/>
            <person name="Lawrence C.E."/>
            <person name="Smit A.F."/>
            <person name="Chakravarti A."/>
            <person name="Haussler D."/>
            <person name="Green P."/>
            <person name="Miller W."/>
            <person name="Green E.D."/>
        </authorList>
    </citation>
    <scope>NUCLEOTIDE SEQUENCE [LARGE SCALE GENOMIC DNA]</scope>
</reference>
<protein>
    <recommendedName>
        <fullName>Suppressor of tumorigenicity 7 protein</fullName>
    </recommendedName>
</protein>